<dbReference type="EC" id="6.3.2.6" evidence="1"/>
<dbReference type="EMBL" id="CP001139">
    <property type="protein sequence ID" value="ACH66258.1"/>
    <property type="molecule type" value="Genomic_DNA"/>
</dbReference>
<dbReference type="RefSeq" id="WP_012533608.1">
    <property type="nucleotide sequence ID" value="NC_011184.1"/>
</dbReference>
<dbReference type="SMR" id="B5FEP5"/>
<dbReference type="KEGG" id="vfm:VFMJ11_1591"/>
<dbReference type="HOGENOM" id="CLU_064197_0_0_6"/>
<dbReference type="UniPathway" id="UPA00074">
    <property type="reaction ID" value="UER00131"/>
</dbReference>
<dbReference type="Proteomes" id="UP000001857">
    <property type="component" value="Chromosome I"/>
</dbReference>
<dbReference type="GO" id="GO:0005737">
    <property type="term" value="C:cytoplasm"/>
    <property type="evidence" value="ECO:0007669"/>
    <property type="project" value="TreeGrafter"/>
</dbReference>
<dbReference type="GO" id="GO:0005524">
    <property type="term" value="F:ATP binding"/>
    <property type="evidence" value="ECO:0007669"/>
    <property type="project" value="UniProtKB-KW"/>
</dbReference>
<dbReference type="GO" id="GO:0004639">
    <property type="term" value="F:phosphoribosylaminoimidazolesuccinocarboxamide synthase activity"/>
    <property type="evidence" value="ECO:0007669"/>
    <property type="project" value="UniProtKB-UniRule"/>
</dbReference>
<dbReference type="GO" id="GO:0006189">
    <property type="term" value="P:'de novo' IMP biosynthetic process"/>
    <property type="evidence" value="ECO:0007669"/>
    <property type="project" value="UniProtKB-UniRule"/>
</dbReference>
<dbReference type="CDD" id="cd01414">
    <property type="entry name" value="SAICAR_synt_Sc"/>
    <property type="match status" value="1"/>
</dbReference>
<dbReference type="Gene3D" id="3.30.470.20">
    <property type="entry name" value="ATP-grasp fold, B domain"/>
    <property type="match status" value="1"/>
</dbReference>
<dbReference type="Gene3D" id="3.30.200.20">
    <property type="entry name" value="Phosphorylase Kinase, domain 1"/>
    <property type="match status" value="1"/>
</dbReference>
<dbReference type="HAMAP" id="MF_00137">
    <property type="entry name" value="SAICAR_synth"/>
    <property type="match status" value="1"/>
</dbReference>
<dbReference type="InterPro" id="IPR028923">
    <property type="entry name" value="SAICAR_synt/ADE2_N"/>
</dbReference>
<dbReference type="InterPro" id="IPR014106">
    <property type="entry name" value="SAICAR_synthase_Vibrio-typ"/>
</dbReference>
<dbReference type="NCBIfam" id="NF010567">
    <property type="entry name" value="PRK13960.1"/>
    <property type="match status" value="1"/>
</dbReference>
<dbReference type="NCBIfam" id="TIGR02735">
    <property type="entry name" value="purC_vibrio"/>
    <property type="match status" value="1"/>
</dbReference>
<dbReference type="PANTHER" id="PTHR43700">
    <property type="entry name" value="PHOSPHORIBOSYLAMINOIMIDAZOLE-SUCCINOCARBOXAMIDE SYNTHASE"/>
    <property type="match status" value="1"/>
</dbReference>
<dbReference type="PANTHER" id="PTHR43700:SF1">
    <property type="entry name" value="PHOSPHORIBOSYLAMINOIMIDAZOLE-SUCCINOCARBOXAMIDE SYNTHASE"/>
    <property type="match status" value="1"/>
</dbReference>
<dbReference type="Pfam" id="PF01259">
    <property type="entry name" value="SAICAR_synt"/>
    <property type="match status" value="1"/>
</dbReference>
<dbReference type="SUPFAM" id="SSF56104">
    <property type="entry name" value="SAICAR synthase-like"/>
    <property type="match status" value="1"/>
</dbReference>
<name>PUR7_ALIFM</name>
<accession>B5FEP5</accession>
<reference key="1">
    <citation type="submission" date="2008-08" db="EMBL/GenBank/DDBJ databases">
        <title>Complete sequence of Vibrio fischeri strain MJ11.</title>
        <authorList>
            <person name="Mandel M.J."/>
            <person name="Stabb E.V."/>
            <person name="Ruby E.G."/>
            <person name="Ferriera S."/>
            <person name="Johnson J."/>
            <person name="Kravitz S."/>
            <person name="Beeson K."/>
            <person name="Sutton G."/>
            <person name="Rogers Y.-H."/>
            <person name="Friedman R."/>
            <person name="Frazier M."/>
            <person name="Venter J.C."/>
        </authorList>
    </citation>
    <scope>NUCLEOTIDE SEQUENCE [LARGE SCALE GENOMIC DNA]</scope>
    <source>
        <strain>MJ11</strain>
    </source>
</reference>
<keyword id="KW-0067">ATP-binding</keyword>
<keyword id="KW-0436">Ligase</keyword>
<keyword id="KW-0547">Nucleotide-binding</keyword>
<keyword id="KW-0658">Purine biosynthesis</keyword>
<protein>
    <recommendedName>
        <fullName evidence="1">Phosphoribosylaminoimidazole-succinocarboxamide synthase</fullName>
        <ecNumber evidence="1">6.3.2.6</ecNumber>
    </recommendedName>
    <alternativeName>
        <fullName evidence="1">SAICAR synthetase</fullName>
    </alternativeName>
</protein>
<feature type="chain" id="PRO_1000117861" description="Phosphoribosylaminoimidazole-succinocarboxamide synthase">
    <location>
        <begin position="1"/>
        <end position="367"/>
    </location>
</feature>
<sequence length="367" mass="41576">MSLSDQVLAVNDDLPIRTDKPVHSGKVRSVYWLTEEDSRRLIKEKGYNVAPDAPLAIMVISDRISAFDCIWRGEGDLKGIPGKGAALNAISNHWFQLFKDNGLADSHILDIPHPFVWIVQKAKPVMIEAICRQYITGSMWRAYTQGEREFCGITLPERLEKDEQLAELLLTPSTKGILKGIDGVPEVDDVNITRKNIEDNYDKFNFSCVEDIATYEKLLKEGFAVIAKALTKIDQIFVDTKFEFGYVEDAQGNEKLIYMDEVGTPDSSRIWDTKAYRSGHIIENSKEGFRQFLLNHFPDPDILLNKNRMEERFALAKENALPLEAMMDLSKTYLDIAAKITGAPITLSDNPKAEIIKVLKEEYQLVD</sequence>
<proteinExistence type="inferred from homology"/>
<comment type="catalytic activity">
    <reaction evidence="1">
        <text>5-amino-1-(5-phospho-D-ribosyl)imidazole-4-carboxylate + L-aspartate + ATP = (2S)-2-[5-amino-1-(5-phospho-beta-D-ribosyl)imidazole-4-carboxamido]succinate + ADP + phosphate + 2 H(+)</text>
        <dbReference type="Rhea" id="RHEA:22628"/>
        <dbReference type="ChEBI" id="CHEBI:15378"/>
        <dbReference type="ChEBI" id="CHEBI:29991"/>
        <dbReference type="ChEBI" id="CHEBI:30616"/>
        <dbReference type="ChEBI" id="CHEBI:43474"/>
        <dbReference type="ChEBI" id="CHEBI:58443"/>
        <dbReference type="ChEBI" id="CHEBI:77657"/>
        <dbReference type="ChEBI" id="CHEBI:456216"/>
        <dbReference type="EC" id="6.3.2.6"/>
    </reaction>
</comment>
<comment type="pathway">
    <text evidence="1">Purine metabolism; IMP biosynthesis via de novo pathway; 5-amino-1-(5-phospho-D-ribosyl)imidazole-4-carboxamide from 5-amino-1-(5-phospho-D-ribosyl)imidazole-4-carboxylate: step 1/2.</text>
</comment>
<comment type="similarity">
    <text evidence="1">Belongs to the SAICAR synthetase family.</text>
</comment>
<evidence type="ECO:0000255" key="1">
    <source>
        <dbReference type="HAMAP-Rule" id="MF_00137"/>
    </source>
</evidence>
<gene>
    <name evidence="1" type="primary">purC</name>
    <name type="ordered locus">VFMJ11_1591</name>
</gene>
<organism>
    <name type="scientific">Aliivibrio fischeri (strain MJ11)</name>
    <name type="common">Vibrio fischeri</name>
    <dbReference type="NCBI Taxonomy" id="388396"/>
    <lineage>
        <taxon>Bacteria</taxon>
        <taxon>Pseudomonadati</taxon>
        <taxon>Pseudomonadota</taxon>
        <taxon>Gammaproteobacteria</taxon>
        <taxon>Vibrionales</taxon>
        <taxon>Vibrionaceae</taxon>
        <taxon>Aliivibrio</taxon>
    </lineage>
</organism>